<keyword id="KW-0028">Amino-acid biosynthesis</keyword>
<keyword id="KW-0055">Arginine biosynthesis</keyword>
<keyword id="KW-0067">ATP-binding</keyword>
<keyword id="KW-0963">Cytoplasm</keyword>
<keyword id="KW-0418">Kinase</keyword>
<keyword id="KW-0547">Nucleotide-binding</keyword>
<keyword id="KW-0808">Transferase</keyword>
<proteinExistence type="inferred from homology"/>
<feature type="chain" id="PRO_1000010506" description="Acetylglutamate kinase">
    <location>
        <begin position="1"/>
        <end position="294"/>
    </location>
</feature>
<feature type="binding site" evidence="1">
    <location>
        <begin position="63"/>
        <end position="64"/>
    </location>
    <ligand>
        <name>substrate</name>
    </ligand>
</feature>
<feature type="binding site" evidence="1">
    <location>
        <position position="85"/>
    </location>
    <ligand>
        <name>substrate</name>
    </ligand>
</feature>
<feature type="binding site" evidence="1">
    <location>
        <position position="188"/>
    </location>
    <ligand>
        <name>substrate</name>
    </ligand>
</feature>
<feature type="site" description="Transition state stabilizer" evidence="1">
    <location>
        <position position="28"/>
    </location>
</feature>
<feature type="site" description="Transition state stabilizer" evidence="1">
    <location>
        <position position="251"/>
    </location>
</feature>
<organism>
    <name type="scientific">Methanococcus aeolicus (strain ATCC BAA-1280 / DSM 17508 / OCM 812 / Nankai-3)</name>
    <dbReference type="NCBI Taxonomy" id="419665"/>
    <lineage>
        <taxon>Archaea</taxon>
        <taxon>Methanobacteriati</taxon>
        <taxon>Methanobacteriota</taxon>
        <taxon>Methanomada group</taxon>
        <taxon>Methanococci</taxon>
        <taxon>Methanococcales</taxon>
        <taxon>Methanococcaceae</taxon>
        <taxon>Methanococcus</taxon>
    </lineage>
</organism>
<protein>
    <recommendedName>
        <fullName evidence="1">Acetylglutamate kinase</fullName>
        <ecNumber evidence="1">2.7.2.8</ecNumber>
    </recommendedName>
    <alternativeName>
        <fullName evidence="1">N-acetyl-L-glutamate 5-phosphotransferase</fullName>
    </alternativeName>
    <alternativeName>
        <fullName evidence="1">NAG kinase</fullName>
        <shortName evidence="1">NAGK</shortName>
    </alternativeName>
</protein>
<gene>
    <name evidence="1" type="primary">argB</name>
    <name type="ordered locus">Maeo_0127</name>
</gene>
<dbReference type="EC" id="2.7.2.8" evidence="1"/>
<dbReference type="EMBL" id="CP000743">
    <property type="protein sequence ID" value="ABR55719.1"/>
    <property type="molecule type" value="Genomic_DNA"/>
</dbReference>
<dbReference type="RefSeq" id="WP_011972851.1">
    <property type="nucleotide sequence ID" value="NC_009635.1"/>
</dbReference>
<dbReference type="SMR" id="A6UT97"/>
<dbReference type="STRING" id="419665.Maeo_0127"/>
<dbReference type="GeneID" id="5327506"/>
<dbReference type="GeneID" id="75305139"/>
<dbReference type="KEGG" id="mae:Maeo_0127"/>
<dbReference type="eggNOG" id="arCOG00862">
    <property type="taxonomic scope" value="Archaea"/>
</dbReference>
<dbReference type="HOGENOM" id="CLU_053680_0_0_2"/>
<dbReference type="OrthoDB" id="6816at2157"/>
<dbReference type="UniPathway" id="UPA00068">
    <property type="reaction ID" value="UER00107"/>
</dbReference>
<dbReference type="Proteomes" id="UP000001106">
    <property type="component" value="Chromosome"/>
</dbReference>
<dbReference type="GO" id="GO:0005737">
    <property type="term" value="C:cytoplasm"/>
    <property type="evidence" value="ECO:0007669"/>
    <property type="project" value="UniProtKB-SubCell"/>
</dbReference>
<dbReference type="GO" id="GO:0003991">
    <property type="term" value="F:acetylglutamate kinase activity"/>
    <property type="evidence" value="ECO:0007669"/>
    <property type="project" value="UniProtKB-UniRule"/>
</dbReference>
<dbReference type="GO" id="GO:0005524">
    <property type="term" value="F:ATP binding"/>
    <property type="evidence" value="ECO:0007669"/>
    <property type="project" value="UniProtKB-UniRule"/>
</dbReference>
<dbReference type="GO" id="GO:0042450">
    <property type="term" value="P:arginine biosynthetic process via ornithine"/>
    <property type="evidence" value="ECO:0007669"/>
    <property type="project" value="UniProtKB-UniRule"/>
</dbReference>
<dbReference type="GO" id="GO:0006526">
    <property type="term" value="P:L-arginine biosynthetic process"/>
    <property type="evidence" value="ECO:0007669"/>
    <property type="project" value="UniProtKB-UniPathway"/>
</dbReference>
<dbReference type="CDD" id="cd04250">
    <property type="entry name" value="AAK_NAGK-C"/>
    <property type="match status" value="1"/>
</dbReference>
<dbReference type="FunFam" id="3.40.1160.10:FF:000004">
    <property type="entry name" value="Acetylglutamate kinase"/>
    <property type="match status" value="1"/>
</dbReference>
<dbReference type="Gene3D" id="3.40.1160.10">
    <property type="entry name" value="Acetylglutamate kinase-like"/>
    <property type="match status" value="1"/>
</dbReference>
<dbReference type="HAMAP" id="MF_00082">
    <property type="entry name" value="ArgB"/>
    <property type="match status" value="1"/>
</dbReference>
<dbReference type="InterPro" id="IPR036393">
    <property type="entry name" value="AceGlu_kinase-like_sf"/>
</dbReference>
<dbReference type="InterPro" id="IPR004662">
    <property type="entry name" value="AcgluKinase_fam"/>
</dbReference>
<dbReference type="InterPro" id="IPR037528">
    <property type="entry name" value="ArgB"/>
</dbReference>
<dbReference type="InterPro" id="IPR001048">
    <property type="entry name" value="Asp/Glu/Uridylate_kinase"/>
</dbReference>
<dbReference type="InterPro" id="IPR041727">
    <property type="entry name" value="NAGK-C"/>
</dbReference>
<dbReference type="NCBIfam" id="TIGR00761">
    <property type="entry name" value="argB"/>
    <property type="match status" value="1"/>
</dbReference>
<dbReference type="PANTHER" id="PTHR23342">
    <property type="entry name" value="N-ACETYLGLUTAMATE SYNTHASE"/>
    <property type="match status" value="1"/>
</dbReference>
<dbReference type="PANTHER" id="PTHR23342:SF0">
    <property type="entry name" value="N-ACETYLGLUTAMATE SYNTHASE, MITOCHONDRIAL"/>
    <property type="match status" value="1"/>
</dbReference>
<dbReference type="Pfam" id="PF00696">
    <property type="entry name" value="AA_kinase"/>
    <property type="match status" value="1"/>
</dbReference>
<dbReference type="PIRSF" id="PIRSF000728">
    <property type="entry name" value="NAGK"/>
    <property type="match status" value="1"/>
</dbReference>
<dbReference type="SUPFAM" id="SSF53633">
    <property type="entry name" value="Carbamate kinase-like"/>
    <property type="match status" value="1"/>
</dbReference>
<reference key="1">
    <citation type="submission" date="2007-06" db="EMBL/GenBank/DDBJ databases">
        <title>Complete sequence of Methanococcus aeolicus Nankai-3.</title>
        <authorList>
            <consortium name="US DOE Joint Genome Institute"/>
            <person name="Copeland A."/>
            <person name="Lucas S."/>
            <person name="Lapidus A."/>
            <person name="Barry K."/>
            <person name="Glavina del Rio T."/>
            <person name="Dalin E."/>
            <person name="Tice H."/>
            <person name="Pitluck S."/>
            <person name="Chain P."/>
            <person name="Malfatti S."/>
            <person name="Shin M."/>
            <person name="Vergez L."/>
            <person name="Schmutz J."/>
            <person name="Larimer F."/>
            <person name="Land M."/>
            <person name="Hauser L."/>
            <person name="Kyrpides N."/>
            <person name="Lykidis A."/>
            <person name="Sieprawska-Lupa M."/>
            <person name="Whitman W.B."/>
            <person name="Richardson P."/>
        </authorList>
    </citation>
    <scope>NUCLEOTIDE SEQUENCE [LARGE SCALE GENOMIC DNA]</scope>
    <source>
        <strain>ATCC BAA-1280 / DSM 17508 / OCM 812 / Nankai-3</strain>
    </source>
</reference>
<comment type="function">
    <text evidence="1">Catalyzes the ATP-dependent phosphorylation of N-acetyl-L-glutamate.</text>
</comment>
<comment type="catalytic activity">
    <reaction evidence="1">
        <text>N-acetyl-L-glutamate + ATP = N-acetyl-L-glutamyl 5-phosphate + ADP</text>
        <dbReference type="Rhea" id="RHEA:14629"/>
        <dbReference type="ChEBI" id="CHEBI:30616"/>
        <dbReference type="ChEBI" id="CHEBI:44337"/>
        <dbReference type="ChEBI" id="CHEBI:57936"/>
        <dbReference type="ChEBI" id="CHEBI:456216"/>
        <dbReference type="EC" id="2.7.2.8"/>
    </reaction>
</comment>
<comment type="pathway">
    <text evidence="1">Amino-acid biosynthesis; L-arginine biosynthesis; N(2)-acetyl-L-ornithine from L-glutamate: step 2/4.</text>
</comment>
<comment type="subcellular location">
    <subcellularLocation>
        <location evidence="1">Cytoplasm</location>
    </subcellularLocation>
</comment>
<comment type="similarity">
    <text evidence="1">Belongs to the acetylglutamate kinase family. ArgB subfamily.</text>
</comment>
<name>ARGB_META3</name>
<evidence type="ECO:0000255" key="1">
    <source>
        <dbReference type="HAMAP-Rule" id="MF_00082"/>
    </source>
</evidence>
<sequence>MDNALKAEVLIESLPYICKFQDQKIVIKYGGHAMVDEEAKSWIAKDVVLLRFVGLNPVIIHGGGPEINKAMEKMGKEPEFIHGLRVTDEETLDIVKMVLIGKINGDIVSKLGKYGGKAVGLSGKSGHLISARKKIQYIIKEDEKIEVDLGRVGEVDSINTELIDILLEKKYIPVISPIGIDSQANTYNLNADIAAGDIAGAINAKKLIMITDVDGVMDDINDPSTIYKKLTISQVGEMIDKGIISGGMIPKIEACVNALRKGVDSVHIINGKIPHSVLLEVFTEEGIGTMITRD</sequence>
<accession>A6UT97</accession>